<gene>
    <name type="primary">ube2s</name>
    <name type="ORF">DDB_G0289021</name>
</gene>
<proteinExistence type="inferred from homology"/>
<comment type="function">
    <text evidence="1">Catalyzes the covalent attachment of ubiquitin to other proteins. Acts as an essential factor of the anaphase promoting complex/cyclosome (APC/C), a cell cycle-regulated ubiquitin ligase that controls progression through mitosis. Acts by specifically elongating polyubiquitin chains initiated by the E2 enzyme ubch10 on APC/C substrates, enhancing the degradation of APC/C substrates by the proteasome and promoting mitotic exit.</text>
</comment>
<comment type="catalytic activity">
    <reaction evidence="1 2">
        <text>S-ubiquitinyl-[E1 ubiquitin-activating enzyme]-L-cysteine + [E2 ubiquitin-conjugating enzyme]-L-cysteine = [E1 ubiquitin-activating enzyme]-L-cysteine + S-ubiquitinyl-[E2 ubiquitin-conjugating enzyme]-L-cysteine.</text>
        <dbReference type="EC" id="2.3.2.23"/>
    </reaction>
</comment>
<comment type="pathway">
    <text evidence="1">Protein modification; protein ubiquitination.</text>
</comment>
<comment type="similarity">
    <text evidence="1">Belongs to the ubiquitin-conjugating enzyme family.</text>
</comment>
<reference key="1">
    <citation type="journal article" date="2005" name="Nature">
        <title>The genome of the social amoeba Dictyostelium discoideum.</title>
        <authorList>
            <person name="Eichinger L."/>
            <person name="Pachebat J.A."/>
            <person name="Gloeckner G."/>
            <person name="Rajandream M.A."/>
            <person name="Sucgang R."/>
            <person name="Berriman M."/>
            <person name="Song J."/>
            <person name="Olsen R."/>
            <person name="Szafranski K."/>
            <person name="Xu Q."/>
            <person name="Tunggal B."/>
            <person name="Kummerfeld S."/>
            <person name="Madera M."/>
            <person name="Konfortov B.A."/>
            <person name="Rivero F."/>
            <person name="Bankier A.T."/>
            <person name="Lehmann R."/>
            <person name="Hamlin N."/>
            <person name="Davies R."/>
            <person name="Gaudet P."/>
            <person name="Fey P."/>
            <person name="Pilcher K."/>
            <person name="Chen G."/>
            <person name="Saunders D."/>
            <person name="Sodergren E.J."/>
            <person name="Davis P."/>
            <person name="Kerhornou A."/>
            <person name="Nie X."/>
            <person name="Hall N."/>
            <person name="Anjard C."/>
            <person name="Hemphill L."/>
            <person name="Bason N."/>
            <person name="Farbrother P."/>
            <person name="Desany B."/>
            <person name="Just E."/>
            <person name="Morio T."/>
            <person name="Rost R."/>
            <person name="Churcher C.M."/>
            <person name="Cooper J."/>
            <person name="Haydock S."/>
            <person name="van Driessche N."/>
            <person name="Cronin A."/>
            <person name="Goodhead I."/>
            <person name="Muzny D.M."/>
            <person name="Mourier T."/>
            <person name="Pain A."/>
            <person name="Lu M."/>
            <person name="Harper D."/>
            <person name="Lindsay R."/>
            <person name="Hauser H."/>
            <person name="James K.D."/>
            <person name="Quiles M."/>
            <person name="Madan Babu M."/>
            <person name="Saito T."/>
            <person name="Buchrieser C."/>
            <person name="Wardroper A."/>
            <person name="Felder M."/>
            <person name="Thangavelu M."/>
            <person name="Johnson D."/>
            <person name="Knights A."/>
            <person name="Loulseged H."/>
            <person name="Mungall K.L."/>
            <person name="Oliver K."/>
            <person name="Price C."/>
            <person name="Quail M.A."/>
            <person name="Urushihara H."/>
            <person name="Hernandez J."/>
            <person name="Rabbinowitsch E."/>
            <person name="Steffen D."/>
            <person name="Sanders M."/>
            <person name="Ma J."/>
            <person name="Kohara Y."/>
            <person name="Sharp S."/>
            <person name="Simmonds M.N."/>
            <person name="Spiegler S."/>
            <person name="Tivey A."/>
            <person name="Sugano S."/>
            <person name="White B."/>
            <person name="Walker D."/>
            <person name="Woodward J.R."/>
            <person name="Winckler T."/>
            <person name="Tanaka Y."/>
            <person name="Shaulsky G."/>
            <person name="Schleicher M."/>
            <person name="Weinstock G.M."/>
            <person name="Rosenthal A."/>
            <person name="Cox E.C."/>
            <person name="Chisholm R.L."/>
            <person name="Gibbs R.A."/>
            <person name="Loomis W.F."/>
            <person name="Platzer M."/>
            <person name="Kay R.R."/>
            <person name="Williams J.G."/>
            <person name="Dear P.H."/>
            <person name="Noegel A.A."/>
            <person name="Barrell B.G."/>
            <person name="Kuspa A."/>
        </authorList>
    </citation>
    <scope>NUCLEOTIDE SEQUENCE [LARGE SCALE GENOMIC DNA]</scope>
    <source>
        <strain>AX4</strain>
    </source>
</reference>
<organism>
    <name type="scientific">Dictyostelium discoideum</name>
    <name type="common">Social amoeba</name>
    <dbReference type="NCBI Taxonomy" id="44689"/>
    <lineage>
        <taxon>Eukaryota</taxon>
        <taxon>Amoebozoa</taxon>
        <taxon>Evosea</taxon>
        <taxon>Eumycetozoa</taxon>
        <taxon>Dictyostelia</taxon>
        <taxon>Dictyosteliales</taxon>
        <taxon>Dictyosteliaceae</taxon>
        <taxon>Dictyostelium</taxon>
    </lineage>
</organism>
<dbReference type="EC" id="2.3.2.23"/>
<dbReference type="EMBL" id="AAFI02000129">
    <property type="protein sequence ID" value="EAL62926.1"/>
    <property type="molecule type" value="Genomic_DNA"/>
</dbReference>
<dbReference type="RefSeq" id="XP_636428.1">
    <property type="nucleotide sequence ID" value="XM_631336.1"/>
</dbReference>
<dbReference type="SMR" id="Q54I43"/>
<dbReference type="FunCoup" id="Q54I43">
    <property type="interactions" value="762"/>
</dbReference>
<dbReference type="STRING" id="44689.Q54I43"/>
<dbReference type="PaxDb" id="44689-DDB0305006"/>
<dbReference type="EnsemblProtists" id="EAL62926">
    <property type="protein sequence ID" value="EAL62926"/>
    <property type="gene ID" value="DDB_G0289021"/>
</dbReference>
<dbReference type="GeneID" id="8626920"/>
<dbReference type="KEGG" id="ddi:DDB_G0289021"/>
<dbReference type="dictyBase" id="DDB_G0289021">
    <property type="gene designation" value="ube2s"/>
</dbReference>
<dbReference type="VEuPathDB" id="AmoebaDB:DDB_G0289021"/>
<dbReference type="eggNOG" id="KOG0423">
    <property type="taxonomic scope" value="Eukaryota"/>
</dbReference>
<dbReference type="HOGENOM" id="CLU_030988_5_3_1"/>
<dbReference type="InParanoid" id="Q54I43"/>
<dbReference type="OMA" id="QPAKCGA"/>
<dbReference type="PhylomeDB" id="Q54I43"/>
<dbReference type="Reactome" id="R-DDI-141430">
    <property type="pathway name" value="Inactivation of APC/C via direct inhibition of the APC/C complex"/>
</dbReference>
<dbReference type="Reactome" id="R-DDI-174048">
    <property type="pathway name" value="APC/C:Cdc20 mediated degradation of Cyclin B"/>
</dbReference>
<dbReference type="Reactome" id="R-DDI-174084">
    <property type="pathway name" value="Autodegradation of Cdh1 by Cdh1:APC/C"/>
</dbReference>
<dbReference type="Reactome" id="R-DDI-174154">
    <property type="pathway name" value="APC/C:Cdc20 mediated degradation of Securin"/>
</dbReference>
<dbReference type="Reactome" id="R-DDI-174178">
    <property type="pathway name" value="APC/C:Cdh1 mediated degradation of Cdc20 and other APC/C:Cdh1 targeted proteins in late mitosis/early G1"/>
</dbReference>
<dbReference type="Reactome" id="R-DDI-174184">
    <property type="pathway name" value="Cdc20:Phospho-APC/C mediated degradation of Cyclin A"/>
</dbReference>
<dbReference type="Reactome" id="R-DDI-176407">
    <property type="pathway name" value="Conversion from APC/C:Cdc20 to APC/C:Cdh1 in late anaphase"/>
</dbReference>
<dbReference type="Reactome" id="R-DDI-176408">
    <property type="pathway name" value="Regulation of APC/C activators between G1/S and early anaphase"/>
</dbReference>
<dbReference type="Reactome" id="R-DDI-176409">
    <property type="pathway name" value="APC/C:Cdc20 mediated degradation of mitotic proteins"/>
</dbReference>
<dbReference type="Reactome" id="R-DDI-176412">
    <property type="pathway name" value="Phosphorylation of the APC/C"/>
</dbReference>
<dbReference type="Reactome" id="R-DDI-179409">
    <property type="pathway name" value="APC-Cdc20 mediated degradation of Nek2A"/>
</dbReference>
<dbReference type="Reactome" id="R-DDI-2467813">
    <property type="pathway name" value="Separation of Sister Chromatids"/>
</dbReference>
<dbReference type="Reactome" id="R-DDI-2559582">
    <property type="pathway name" value="Senescence-Associated Secretory Phenotype (SASP)"/>
</dbReference>
<dbReference type="Reactome" id="R-DDI-69017">
    <property type="pathway name" value="CDK-mediated phosphorylation and removal of Cdc6"/>
</dbReference>
<dbReference type="Reactome" id="R-DDI-8866652">
    <property type="pathway name" value="Synthesis of active ubiquitin: roles of E1 and E2 enzymes"/>
</dbReference>
<dbReference type="Reactome" id="R-DDI-983168">
    <property type="pathway name" value="Antigen processing: Ubiquitination &amp; Proteasome degradation"/>
</dbReference>
<dbReference type="UniPathway" id="UPA00143"/>
<dbReference type="PRO" id="PR:Q54I43"/>
<dbReference type="Proteomes" id="UP000002195">
    <property type="component" value="Chromosome 5"/>
</dbReference>
<dbReference type="GO" id="GO:0005634">
    <property type="term" value="C:nucleus"/>
    <property type="evidence" value="ECO:0000318"/>
    <property type="project" value="GO_Central"/>
</dbReference>
<dbReference type="GO" id="GO:0005524">
    <property type="term" value="F:ATP binding"/>
    <property type="evidence" value="ECO:0007669"/>
    <property type="project" value="UniProtKB-KW"/>
</dbReference>
<dbReference type="GO" id="GO:0061631">
    <property type="term" value="F:ubiquitin conjugating enzyme activity"/>
    <property type="evidence" value="ECO:0000318"/>
    <property type="project" value="GO_Central"/>
</dbReference>
<dbReference type="GO" id="GO:0051301">
    <property type="term" value="P:cell division"/>
    <property type="evidence" value="ECO:0007669"/>
    <property type="project" value="UniProtKB-KW"/>
</dbReference>
<dbReference type="GO" id="GO:0000209">
    <property type="term" value="P:protein polyubiquitination"/>
    <property type="evidence" value="ECO:0000318"/>
    <property type="project" value="GO_Central"/>
</dbReference>
<dbReference type="GO" id="GO:0006511">
    <property type="term" value="P:ubiquitin-dependent protein catabolic process"/>
    <property type="evidence" value="ECO:0000318"/>
    <property type="project" value="GO_Central"/>
</dbReference>
<dbReference type="CDD" id="cd23804">
    <property type="entry name" value="UBCc_UBE2S"/>
    <property type="match status" value="1"/>
</dbReference>
<dbReference type="FunFam" id="3.10.110.10:FF:000031">
    <property type="entry name" value="Ubiquitin-conjugating enzyme E2 22"/>
    <property type="match status" value="1"/>
</dbReference>
<dbReference type="Gene3D" id="3.10.110.10">
    <property type="entry name" value="Ubiquitin Conjugating Enzyme"/>
    <property type="match status" value="1"/>
</dbReference>
<dbReference type="InterPro" id="IPR050113">
    <property type="entry name" value="Ub_conjugating_enzyme"/>
</dbReference>
<dbReference type="InterPro" id="IPR000608">
    <property type="entry name" value="UBQ-conjugat_E2_core"/>
</dbReference>
<dbReference type="InterPro" id="IPR023313">
    <property type="entry name" value="UBQ-conjugating_AS"/>
</dbReference>
<dbReference type="InterPro" id="IPR016135">
    <property type="entry name" value="UBQ-conjugating_enzyme/RWD"/>
</dbReference>
<dbReference type="PANTHER" id="PTHR24067">
    <property type="entry name" value="UBIQUITIN-CONJUGATING ENZYME E2"/>
    <property type="match status" value="1"/>
</dbReference>
<dbReference type="Pfam" id="PF00179">
    <property type="entry name" value="UQ_con"/>
    <property type="match status" value="1"/>
</dbReference>
<dbReference type="SMART" id="SM00212">
    <property type="entry name" value="UBCc"/>
    <property type="match status" value="1"/>
</dbReference>
<dbReference type="SUPFAM" id="SSF54495">
    <property type="entry name" value="UBC-like"/>
    <property type="match status" value="1"/>
</dbReference>
<dbReference type="PROSITE" id="PS00183">
    <property type="entry name" value="UBC_1"/>
    <property type="match status" value="1"/>
</dbReference>
<dbReference type="PROSITE" id="PS50127">
    <property type="entry name" value="UBC_2"/>
    <property type="match status" value="1"/>
</dbReference>
<sequence length="215" mass="23617">MSSENLPPDVIKRVVKELKELNSSTLEGITLLPCEEDITNIEAVVTGPAGTPYEGGYFKARLILSSDFPRSPPKANFITKIFHPNVSKKGEICVNTLKKDWTEDLGLKHILLTIKCLLIVPNAESSLNEDASRLLLENYDDYCKHAKLFTSIHASKPIIDSNNNNENSTTTPTTTTTATTPSTNTASISSPVKKKTETTNSTTTKVQPKKSLKRL</sequence>
<keyword id="KW-0067">ATP-binding</keyword>
<keyword id="KW-0131">Cell cycle</keyword>
<keyword id="KW-0132">Cell division</keyword>
<keyword id="KW-0547">Nucleotide-binding</keyword>
<keyword id="KW-1185">Reference proteome</keyword>
<keyword id="KW-0808">Transferase</keyword>
<keyword id="KW-0833">Ubl conjugation pathway</keyword>
<protein>
    <recommendedName>
        <fullName>Ubiquitin-conjugating enzyme E2 S</fullName>
        <ecNumber>2.3.2.23</ecNumber>
    </recommendedName>
    <alternativeName>
        <fullName>E2 ubiquitin-conjugating enzyme S</fullName>
    </alternativeName>
    <alternativeName>
        <fullName>Ubiquitin carrier protein S</fullName>
    </alternativeName>
    <alternativeName>
        <fullName>Ubiquitin-protein ligase S</fullName>
    </alternativeName>
</protein>
<evidence type="ECO:0000255" key="1">
    <source>
        <dbReference type="PROSITE-ProRule" id="PRU00388"/>
    </source>
</evidence>
<evidence type="ECO:0000255" key="2">
    <source>
        <dbReference type="PROSITE-ProRule" id="PRU10133"/>
    </source>
</evidence>
<evidence type="ECO:0000256" key="3">
    <source>
        <dbReference type="SAM" id="MobiDB-lite"/>
    </source>
</evidence>
<name>UBE2S_DICDI</name>
<feature type="chain" id="PRO_0000327752" description="Ubiquitin-conjugating enzyme E2 S">
    <location>
        <begin position="1"/>
        <end position="215"/>
    </location>
</feature>
<feature type="domain" description="UBC core" evidence="1">
    <location>
        <begin position="9"/>
        <end position="155"/>
    </location>
</feature>
<feature type="region of interest" description="Disordered" evidence="3">
    <location>
        <begin position="159"/>
        <end position="215"/>
    </location>
</feature>
<feature type="compositionally biased region" description="Low complexity" evidence="3">
    <location>
        <begin position="161"/>
        <end position="190"/>
    </location>
</feature>
<feature type="active site" description="Glycyl thioester intermediate" evidence="1 2">
    <location>
        <position position="93"/>
    </location>
</feature>
<accession>Q54I43</accession>